<dbReference type="EC" id="4.1.2.13"/>
<dbReference type="EMBL" id="M10946">
    <property type="protein sequence ID" value="AAA48587.1"/>
    <property type="molecule type" value="Genomic_DNA"/>
</dbReference>
<dbReference type="PIR" id="A22568">
    <property type="entry name" value="ADCHB"/>
</dbReference>
<dbReference type="RefSeq" id="NP_001007978.1">
    <property type="nucleotide sequence ID" value="NM_001007977.4"/>
</dbReference>
<dbReference type="SMR" id="P07341"/>
<dbReference type="BioGRID" id="686645">
    <property type="interactions" value="1"/>
</dbReference>
<dbReference type="FunCoup" id="P07341">
    <property type="interactions" value="1133"/>
</dbReference>
<dbReference type="IntAct" id="P07341">
    <property type="interactions" value="1"/>
</dbReference>
<dbReference type="STRING" id="9031.ENSGALP00000036836"/>
<dbReference type="PaxDb" id="9031-ENSGALP00000036836"/>
<dbReference type="Ensembl" id="ENSGALT00010013368.1">
    <property type="protein sequence ID" value="ENSGALP00010007922.1"/>
    <property type="gene ID" value="ENSGALG00010005583.1"/>
</dbReference>
<dbReference type="GeneID" id="427308"/>
<dbReference type="KEGG" id="gga:427308"/>
<dbReference type="CTD" id="229"/>
<dbReference type="VEuPathDB" id="HostDB:geneid_427308"/>
<dbReference type="eggNOG" id="KOG1557">
    <property type="taxonomic scope" value="Eukaryota"/>
</dbReference>
<dbReference type="GeneTree" id="ENSGT00950000182987"/>
<dbReference type="HOGENOM" id="CLU_031243_0_0_1"/>
<dbReference type="InParanoid" id="P07341"/>
<dbReference type="OMA" id="CKGQYVT"/>
<dbReference type="OrthoDB" id="36455at2759"/>
<dbReference type="PhylomeDB" id="P07341"/>
<dbReference type="TreeFam" id="TF314203"/>
<dbReference type="Reactome" id="R-GGA-352875">
    <property type="pathway name" value="Gluconeogenesis"/>
</dbReference>
<dbReference type="Reactome" id="R-GGA-352882">
    <property type="pathway name" value="Glycolysis"/>
</dbReference>
<dbReference type="Reactome" id="R-GGA-70171">
    <property type="pathway name" value="Glycolysis"/>
</dbReference>
<dbReference type="Reactome" id="R-GGA-70263">
    <property type="pathway name" value="Gluconeogenesis"/>
</dbReference>
<dbReference type="Reactome" id="R-GGA-70350">
    <property type="pathway name" value="Fructose catabolism"/>
</dbReference>
<dbReference type="UniPathway" id="UPA00109">
    <property type="reaction ID" value="UER00183"/>
</dbReference>
<dbReference type="PRO" id="PR:P07341"/>
<dbReference type="Proteomes" id="UP000000539">
    <property type="component" value="Chromosome Z"/>
</dbReference>
<dbReference type="Bgee" id="ENSGALG00000015544">
    <property type="expression patterns" value="Expressed in liver and 11 other cell types or tissues"/>
</dbReference>
<dbReference type="GO" id="GO:0034451">
    <property type="term" value="C:centriolar satellite"/>
    <property type="evidence" value="ECO:0000247"/>
    <property type="project" value="AgBase"/>
</dbReference>
<dbReference type="GO" id="GO:0005829">
    <property type="term" value="C:cytosol"/>
    <property type="evidence" value="ECO:0000318"/>
    <property type="project" value="GO_Central"/>
</dbReference>
<dbReference type="GO" id="GO:0070062">
    <property type="term" value="C:extracellular exosome"/>
    <property type="evidence" value="ECO:0000247"/>
    <property type="project" value="AgBase"/>
</dbReference>
<dbReference type="GO" id="GO:0005815">
    <property type="term" value="C:microtubule organizing center"/>
    <property type="evidence" value="ECO:0000247"/>
    <property type="project" value="AgBase"/>
</dbReference>
<dbReference type="GO" id="GO:0051117">
    <property type="term" value="F:ATPase binding"/>
    <property type="evidence" value="ECO:0000247"/>
    <property type="project" value="AgBase"/>
</dbReference>
<dbReference type="GO" id="GO:0008092">
    <property type="term" value="F:cytoskeletal protein binding"/>
    <property type="evidence" value="ECO:0000247"/>
    <property type="project" value="AgBase"/>
</dbReference>
<dbReference type="GO" id="GO:0070061">
    <property type="term" value="F:fructose binding"/>
    <property type="evidence" value="ECO:0000247"/>
    <property type="project" value="AgBase"/>
</dbReference>
<dbReference type="GO" id="GO:0061609">
    <property type="term" value="F:fructose-1-phosphate aldolase activity"/>
    <property type="evidence" value="ECO:0000247"/>
    <property type="project" value="AgBase"/>
</dbReference>
<dbReference type="GO" id="GO:0004332">
    <property type="term" value="F:fructose-bisphosphate aldolase activity"/>
    <property type="evidence" value="ECO:0000247"/>
    <property type="project" value="AgBase"/>
</dbReference>
<dbReference type="GO" id="GO:0042802">
    <property type="term" value="F:identical protein binding"/>
    <property type="evidence" value="ECO:0000247"/>
    <property type="project" value="AgBase"/>
</dbReference>
<dbReference type="GO" id="GO:0060090">
    <property type="term" value="F:molecular adaptor activity"/>
    <property type="evidence" value="ECO:0007669"/>
    <property type="project" value="Ensembl"/>
</dbReference>
<dbReference type="GO" id="GO:0030388">
    <property type="term" value="P:fructose 1,6-bisphosphate metabolic process"/>
    <property type="evidence" value="ECO:0000247"/>
    <property type="project" value="AgBase"/>
</dbReference>
<dbReference type="GO" id="GO:0061624">
    <property type="term" value="P:fructose catabolic process to hydroxyacetone phosphate and glyceraldehyde-3-phosphate"/>
    <property type="evidence" value="ECO:0007669"/>
    <property type="project" value="Ensembl"/>
</dbReference>
<dbReference type="GO" id="GO:0006000">
    <property type="term" value="P:fructose metabolic process"/>
    <property type="evidence" value="ECO:0000247"/>
    <property type="project" value="AgBase"/>
</dbReference>
<dbReference type="GO" id="GO:0006094">
    <property type="term" value="P:gluconeogenesis"/>
    <property type="evidence" value="ECO:0000304"/>
    <property type="project" value="Reactome"/>
</dbReference>
<dbReference type="GO" id="GO:0006096">
    <property type="term" value="P:glycolytic process"/>
    <property type="evidence" value="ECO:0000247"/>
    <property type="project" value="AgBase"/>
</dbReference>
<dbReference type="GO" id="GO:0001889">
    <property type="term" value="P:liver development"/>
    <property type="evidence" value="ECO:0000270"/>
    <property type="project" value="AgBase"/>
</dbReference>
<dbReference type="GO" id="GO:1905856">
    <property type="term" value="P:negative regulation of pentose-phosphate shunt"/>
    <property type="evidence" value="ECO:0007669"/>
    <property type="project" value="Ensembl"/>
</dbReference>
<dbReference type="GO" id="GO:0032781">
    <property type="term" value="P:positive regulation of ATP-dependent activity"/>
    <property type="evidence" value="ECO:0000247"/>
    <property type="project" value="AgBase"/>
</dbReference>
<dbReference type="GO" id="GO:0070072">
    <property type="term" value="P:vacuolar proton-transporting V-type ATPase complex assembly"/>
    <property type="evidence" value="ECO:0000247"/>
    <property type="project" value="AgBase"/>
</dbReference>
<dbReference type="CDD" id="cd00948">
    <property type="entry name" value="FBP_aldolase_I_a"/>
    <property type="match status" value="1"/>
</dbReference>
<dbReference type="FunFam" id="3.20.20.70:FF:000021">
    <property type="entry name" value="Fructose-bisphosphate aldolase"/>
    <property type="match status" value="1"/>
</dbReference>
<dbReference type="Gene3D" id="3.20.20.70">
    <property type="entry name" value="Aldolase class I"/>
    <property type="match status" value="1"/>
</dbReference>
<dbReference type="InterPro" id="IPR029768">
    <property type="entry name" value="Aldolase_I_AS"/>
</dbReference>
<dbReference type="InterPro" id="IPR013785">
    <property type="entry name" value="Aldolase_TIM"/>
</dbReference>
<dbReference type="InterPro" id="IPR000741">
    <property type="entry name" value="FBA_I"/>
</dbReference>
<dbReference type="NCBIfam" id="NF033379">
    <property type="entry name" value="FrucBisAld_I"/>
    <property type="match status" value="1"/>
</dbReference>
<dbReference type="PANTHER" id="PTHR11627">
    <property type="entry name" value="FRUCTOSE-BISPHOSPHATE ALDOLASE"/>
    <property type="match status" value="1"/>
</dbReference>
<dbReference type="Pfam" id="PF00274">
    <property type="entry name" value="Glycolytic"/>
    <property type="match status" value="1"/>
</dbReference>
<dbReference type="SUPFAM" id="SSF51569">
    <property type="entry name" value="Aldolase"/>
    <property type="match status" value="1"/>
</dbReference>
<dbReference type="PROSITE" id="PS00158">
    <property type="entry name" value="ALDOLASE_CLASS_I"/>
    <property type="match status" value="1"/>
</dbReference>
<evidence type="ECO:0000250" key="1"/>
<evidence type="ECO:0000305" key="2"/>
<comment type="catalytic activity">
    <reaction>
        <text>beta-D-fructose 1,6-bisphosphate = D-glyceraldehyde 3-phosphate + dihydroxyacetone phosphate</text>
        <dbReference type="Rhea" id="RHEA:14729"/>
        <dbReference type="ChEBI" id="CHEBI:32966"/>
        <dbReference type="ChEBI" id="CHEBI:57642"/>
        <dbReference type="ChEBI" id="CHEBI:59776"/>
        <dbReference type="EC" id="4.1.2.13"/>
    </reaction>
</comment>
<comment type="pathway">
    <text>Carbohydrate degradation; glycolysis; D-glyceraldehyde 3-phosphate and glycerone phosphate from D-glucose: step 4/4.</text>
</comment>
<comment type="subunit">
    <text>Homotetramer.</text>
</comment>
<comment type="subcellular location">
    <subcellularLocation>
        <location evidence="1">Cytoplasm</location>
        <location evidence="1">Cytoskeleton</location>
        <location evidence="1">Microtubule organizing center</location>
        <location evidence="1">Centrosome</location>
        <location evidence="1">Centriolar satellite</location>
    </subcellularLocation>
</comment>
<comment type="miscellaneous">
    <text>In vertebrates, 3 forms of this ubiquitous glycolytic enzyme are found, aldolase A in muscle, aldolase B in liver and aldolase C in brain.</text>
</comment>
<comment type="similarity">
    <text evidence="2">Belongs to the class I fructose-bisphosphate aldolase family.</text>
</comment>
<reference key="1">
    <citation type="journal article" date="1985" name="J. Biol. Chem.">
        <title>Characterization of the chicken aldolase B gene.</title>
        <authorList>
            <person name="Burgess D.G."/>
            <person name="Penhoet E.E."/>
        </authorList>
    </citation>
    <scope>NUCLEOTIDE SEQUENCE [GENOMIC DNA]</scope>
</reference>
<keyword id="KW-0963">Cytoplasm</keyword>
<keyword id="KW-0206">Cytoskeleton</keyword>
<keyword id="KW-0324">Glycolysis</keyword>
<keyword id="KW-0456">Lyase</keyword>
<keyword id="KW-1185">Reference proteome</keyword>
<keyword id="KW-0704">Schiff base</keyword>
<accession>P07341</accession>
<name>ALDOB_CHICK</name>
<organism>
    <name type="scientific">Gallus gallus</name>
    <name type="common">Chicken</name>
    <dbReference type="NCBI Taxonomy" id="9031"/>
    <lineage>
        <taxon>Eukaryota</taxon>
        <taxon>Metazoa</taxon>
        <taxon>Chordata</taxon>
        <taxon>Craniata</taxon>
        <taxon>Vertebrata</taxon>
        <taxon>Euteleostomi</taxon>
        <taxon>Archelosauria</taxon>
        <taxon>Archosauria</taxon>
        <taxon>Dinosauria</taxon>
        <taxon>Saurischia</taxon>
        <taxon>Theropoda</taxon>
        <taxon>Coelurosauria</taxon>
        <taxon>Aves</taxon>
        <taxon>Neognathae</taxon>
        <taxon>Galloanserae</taxon>
        <taxon>Galliformes</taxon>
        <taxon>Phasianidae</taxon>
        <taxon>Phasianinae</taxon>
        <taxon>Gallus</taxon>
    </lineage>
</organism>
<protein>
    <recommendedName>
        <fullName>Fructose-bisphosphate aldolase B</fullName>
        <ecNumber>4.1.2.13</ecNumber>
    </recommendedName>
    <alternativeName>
        <fullName>Liver-type aldolase</fullName>
    </alternativeName>
</protein>
<proteinExistence type="inferred from homology"/>
<sequence>MTHQFPALSPEQKKALSDIAQRIVASGKGILAADESVGTMGNRLQRINVENTEENRRAFREILFSSDASISKSIGGVILFHETLYQKDSSGKPFPAIIKEKGMVVGIKLDAGTAPLAGTNGETTIQGLDKLAERCAQYKKDGADFGKWRAVLKISSTTPSQLAIQENANTLARYASICQQNGLVPIVEPEVLPDGDHDLQRCQYVTEKVLAAVYKALNDHHVYLEGTLLKPNMVTAGHSCPKKYTPQDVAVATVTTLLRTVPAAVPGICFLSGGQSEEEASLNLNAMNQSPLPKPWKLTFSYGRALQASALAAWLGKSENKKAAQEAFCKRAQINSLACRGQYVTSGKTDTAATQSLFTASYTY</sequence>
<feature type="initiator methionine" description="Removed" evidence="1">
    <location>
        <position position="1"/>
    </location>
</feature>
<feature type="chain" id="PRO_0000216945" description="Fructose-bisphosphate aldolase B">
    <location>
        <begin position="2"/>
        <end position="364"/>
    </location>
</feature>
<feature type="active site" description="Proton acceptor" evidence="1">
    <location>
        <position position="188"/>
    </location>
</feature>
<feature type="active site" description="Schiff-base intermediate with dihydroxyacetone-P" evidence="1">
    <location>
        <position position="230"/>
    </location>
</feature>
<feature type="binding site" evidence="1">
    <location>
        <position position="56"/>
    </location>
    <ligand>
        <name>substrate</name>
    </ligand>
</feature>
<feature type="binding site" evidence="1">
    <location>
        <position position="147"/>
    </location>
    <ligand>
        <name>substrate</name>
    </ligand>
</feature>
<feature type="site" description="Necessary for preference for fructose 1,6-bisphosphate over fructose 1-phosphate" evidence="1">
    <location>
        <position position="364"/>
    </location>
</feature>
<gene>
    <name type="primary">ALDOB</name>
</gene>